<comment type="function">
    <text evidence="1">Catalyzes the transfer of a ribosyl phosphate group from 5-phosphoribose 1-diphosphate to orotate, leading to the formation of orotidine monophosphate (OMP).</text>
</comment>
<comment type="catalytic activity">
    <reaction evidence="1">
        <text>orotidine 5'-phosphate + diphosphate = orotate + 5-phospho-alpha-D-ribose 1-diphosphate</text>
        <dbReference type="Rhea" id="RHEA:10380"/>
        <dbReference type="ChEBI" id="CHEBI:30839"/>
        <dbReference type="ChEBI" id="CHEBI:33019"/>
        <dbReference type="ChEBI" id="CHEBI:57538"/>
        <dbReference type="ChEBI" id="CHEBI:58017"/>
        <dbReference type="EC" id="2.4.2.10"/>
    </reaction>
</comment>
<comment type="cofactor">
    <cofactor evidence="1">
        <name>Mg(2+)</name>
        <dbReference type="ChEBI" id="CHEBI:18420"/>
    </cofactor>
</comment>
<comment type="pathway">
    <text evidence="1">Pyrimidine metabolism; UMP biosynthesis via de novo pathway; UMP from orotate: step 1/2.</text>
</comment>
<comment type="subunit">
    <text evidence="1">Homodimer.</text>
</comment>
<comment type="similarity">
    <text evidence="1">Belongs to the purine/pyrimidine phosphoribosyltransferase family. PyrE subfamily.</text>
</comment>
<keyword id="KW-0328">Glycosyltransferase</keyword>
<keyword id="KW-0460">Magnesium</keyword>
<keyword id="KW-0665">Pyrimidine biosynthesis</keyword>
<keyword id="KW-0808">Transferase</keyword>
<accession>Q83H88</accession>
<proteinExistence type="inferred from homology"/>
<organism>
    <name type="scientific">Tropheryma whipplei (strain TW08/27)</name>
    <name type="common">Whipple's bacillus</name>
    <dbReference type="NCBI Taxonomy" id="218496"/>
    <lineage>
        <taxon>Bacteria</taxon>
        <taxon>Bacillati</taxon>
        <taxon>Actinomycetota</taxon>
        <taxon>Actinomycetes</taxon>
        <taxon>Micrococcales</taxon>
        <taxon>Tropherymataceae</taxon>
        <taxon>Tropheryma</taxon>
    </lineage>
</organism>
<protein>
    <recommendedName>
        <fullName evidence="1">Orotate phosphoribosyltransferase</fullName>
        <shortName evidence="1">OPRT</shortName>
        <shortName evidence="1">OPRTase</shortName>
        <ecNumber evidence="1">2.4.2.10</ecNumber>
    </recommendedName>
</protein>
<dbReference type="EC" id="2.4.2.10" evidence="1"/>
<dbReference type="EMBL" id="BX251412">
    <property type="protein sequence ID" value="CAD67414.1"/>
    <property type="molecule type" value="Genomic_DNA"/>
</dbReference>
<dbReference type="SMR" id="Q83H88"/>
<dbReference type="KEGG" id="tws:TW755"/>
<dbReference type="HOGENOM" id="CLU_074878_2_1_11"/>
<dbReference type="UniPathway" id="UPA00070">
    <property type="reaction ID" value="UER00119"/>
</dbReference>
<dbReference type="GO" id="GO:0000287">
    <property type="term" value="F:magnesium ion binding"/>
    <property type="evidence" value="ECO:0007669"/>
    <property type="project" value="UniProtKB-UniRule"/>
</dbReference>
<dbReference type="GO" id="GO:0004588">
    <property type="term" value="F:orotate phosphoribosyltransferase activity"/>
    <property type="evidence" value="ECO:0007669"/>
    <property type="project" value="UniProtKB-UniRule"/>
</dbReference>
<dbReference type="GO" id="GO:0044205">
    <property type="term" value="P:'de novo' UMP biosynthetic process"/>
    <property type="evidence" value="ECO:0007669"/>
    <property type="project" value="UniProtKB-UniRule"/>
</dbReference>
<dbReference type="GO" id="GO:0019856">
    <property type="term" value="P:pyrimidine nucleobase biosynthetic process"/>
    <property type="evidence" value="ECO:0007669"/>
    <property type="project" value="TreeGrafter"/>
</dbReference>
<dbReference type="CDD" id="cd06223">
    <property type="entry name" value="PRTases_typeI"/>
    <property type="match status" value="1"/>
</dbReference>
<dbReference type="FunFam" id="3.40.50.2020:FF:000029">
    <property type="entry name" value="Orotate phosphoribosyltransferase"/>
    <property type="match status" value="1"/>
</dbReference>
<dbReference type="Gene3D" id="3.40.50.2020">
    <property type="match status" value="1"/>
</dbReference>
<dbReference type="HAMAP" id="MF_01208">
    <property type="entry name" value="PyrE"/>
    <property type="match status" value="1"/>
</dbReference>
<dbReference type="InterPro" id="IPR023031">
    <property type="entry name" value="OPRT"/>
</dbReference>
<dbReference type="InterPro" id="IPR004467">
    <property type="entry name" value="Or_phspho_trans_dom"/>
</dbReference>
<dbReference type="InterPro" id="IPR000836">
    <property type="entry name" value="PRibTrfase_dom"/>
</dbReference>
<dbReference type="InterPro" id="IPR029057">
    <property type="entry name" value="PRTase-like"/>
</dbReference>
<dbReference type="NCBIfam" id="TIGR00336">
    <property type="entry name" value="pyrE"/>
    <property type="match status" value="1"/>
</dbReference>
<dbReference type="PANTHER" id="PTHR19278">
    <property type="entry name" value="OROTATE PHOSPHORIBOSYLTRANSFERASE"/>
    <property type="match status" value="1"/>
</dbReference>
<dbReference type="PANTHER" id="PTHR19278:SF9">
    <property type="entry name" value="URIDINE 5'-MONOPHOSPHATE SYNTHASE"/>
    <property type="match status" value="1"/>
</dbReference>
<dbReference type="Pfam" id="PF00156">
    <property type="entry name" value="Pribosyltran"/>
    <property type="match status" value="1"/>
</dbReference>
<dbReference type="SUPFAM" id="SSF53271">
    <property type="entry name" value="PRTase-like"/>
    <property type="match status" value="1"/>
</dbReference>
<gene>
    <name evidence="1" type="primary">pyrE</name>
    <name type="ordered locus">TW755</name>
</gene>
<name>PYRE_TROW8</name>
<sequence>MQRILDLRRIYALTVDPRALHGSVWKVDFKVVRQELIRYIKDLALFEGEFILSSGQKSSYYIDLRRVSLDCRAAPIIGKVMFDLICDLQDVDAIGGLTMGADPIACAIMHYAASVGRSYNAFVVRKQKKTHGLARLIEGPDIRGKRVVIVEDTSTTGNSPITAARRAEETGATVAAIAVMVDRETGARQAIEKAGYSYYAALRVTDILDRGTAD</sequence>
<feature type="chain" id="PRO_0000110763" description="Orotate phosphoribosyltransferase">
    <location>
        <begin position="1"/>
        <end position="214"/>
    </location>
</feature>
<feature type="binding site" evidence="1">
    <location>
        <position position="125"/>
    </location>
    <ligand>
        <name>5-phospho-alpha-D-ribose 1-diphosphate</name>
        <dbReference type="ChEBI" id="CHEBI:58017"/>
        <note>ligand shared between dimeric partners</note>
    </ligand>
</feature>
<feature type="binding site" description="in other chain" evidence="1">
    <location>
        <position position="126"/>
    </location>
    <ligand>
        <name>5-phospho-alpha-D-ribose 1-diphosphate</name>
        <dbReference type="ChEBI" id="CHEBI:58017"/>
        <note>ligand shared between dimeric partners</note>
    </ligand>
</feature>
<feature type="binding site" evidence="1">
    <location>
        <position position="129"/>
    </location>
    <ligand>
        <name>5-phospho-alpha-D-ribose 1-diphosphate</name>
        <dbReference type="ChEBI" id="CHEBI:58017"/>
        <note>ligand shared between dimeric partners</note>
    </ligand>
</feature>
<feature type="binding site" evidence="1">
    <location>
        <position position="131"/>
    </location>
    <ligand>
        <name>5-phospho-alpha-D-ribose 1-diphosphate</name>
        <dbReference type="ChEBI" id="CHEBI:58017"/>
        <note>ligand shared between dimeric partners</note>
    </ligand>
</feature>
<feature type="binding site" description="in other chain" evidence="1">
    <location>
        <begin position="151"/>
        <end position="159"/>
    </location>
    <ligand>
        <name>5-phospho-alpha-D-ribose 1-diphosphate</name>
        <dbReference type="ChEBI" id="CHEBI:58017"/>
        <note>ligand shared between dimeric partners</note>
    </ligand>
</feature>
<feature type="binding site" evidence="1">
    <location>
        <position position="155"/>
    </location>
    <ligand>
        <name>orotate</name>
        <dbReference type="ChEBI" id="CHEBI:30839"/>
    </ligand>
</feature>
<feature type="binding site" evidence="1">
    <location>
        <position position="183"/>
    </location>
    <ligand>
        <name>orotate</name>
        <dbReference type="ChEBI" id="CHEBI:30839"/>
    </ligand>
</feature>
<evidence type="ECO:0000255" key="1">
    <source>
        <dbReference type="HAMAP-Rule" id="MF_01208"/>
    </source>
</evidence>
<reference key="1">
    <citation type="journal article" date="2003" name="Lancet">
        <title>Sequencing and analysis of the genome of the Whipple's disease bacterium Tropheryma whipplei.</title>
        <authorList>
            <person name="Bentley S.D."/>
            <person name="Maiwald M."/>
            <person name="Murphy L.D."/>
            <person name="Pallen M.J."/>
            <person name="Yeats C.A."/>
            <person name="Dover L.G."/>
            <person name="Norbertczak H.T."/>
            <person name="Besra G.S."/>
            <person name="Quail M.A."/>
            <person name="Harris D.E."/>
            <person name="von Herbay A."/>
            <person name="Goble A."/>
            <person name="Rutter S."/>
            <person name="Squares R."/>
            <person name="Squares S."/>
            <person name="Barrell B.G."/>
            <person name="Parkhill J."/>
            <person name="Relman D.A."/>
        </authorList>
    </citation>
    <scope>NUCLEOTIDE SEQUENCE [LARGE SCALE GENOMIC DNA]</scope>
    <source>
        <strain>TW08/27</strain>
    </source>
</reference>